<name>HIS7_LISMO</name>
<dbReference type="EC" id="4.2.1.19" evidence="1"/>
<dbReference type="EMBL" id="AL591975">
    <property type="protein sequence ID" value="CAC98645.1"/>
    <property type="molecule type" value="Genomic_DNA"/>
</dbReference>
<dbReference type="PIR" id="AG1145">
    <property type="entry name" value="AG1145"/>
</dbReference>
<dbReference type="RefSeq" id="NP_464094.1">
    <property type="nucleotide sequence ID" value="NC_003210.1"/>
</dbReference>
<dbReference type="RefSeq" id="WP_003721360.1">
    <property type="nucleotide sequence ID" value="NZ_CP149495.1"/>
</dbReference>
<dbReference type="SMR" id="Q8Y9G2"/>
<dbReference type="STRING" id="169963.gene:17593217"/>
<dbReference type="PaxDb" id="169963-lmo0566"/>
<dbReference type="EnsemblBacteria" id="CAC98645">
    <property type="protein sequence ID" value="CAC98645"/>
    <property type="gene ID" value="CAC98645"/>
</dbReference>
<dbReference type="GeneID" id="985436"/>
<dbReference type="KEGG" id="lmo:lmo0566"/>
<dbReference type="PATRIC" id="fig|169963.11.peg.585"/>
<dbReference type="eggNOG" id="COG0131">
    <property type="taxonomic scope" value="Bacteria"/>
</dbReference>
<dbReference type="HOGENOM" id="CLU_044308_3_0_9"/>
<dbReference type="OrthoDB" id="9790411at2"/>
<dbReference type="PhylomeDB" id="Q8Y9G2"/>
<dbReference type="BioCyc" id="LMON169963:LMO0566-MONOMER"/>
<dbReference type="UniPathway" id="UPA00031">
    <property type="reaction ID" value="UER00011"/>
</dbReference>
<dbReference type="Proteomes" id="UP000000817">
    <property type="component" value="Chromosome"/>
</dbReference>
<dbReference type="GO" id="GO:0005737">
    <property type="term" value="C:cytoplasm"/>
    <property type="evidence" value="ECO:0007669"/>
    <property type="project" value="UniProtKB-SubCell"/>
</dbReference>
<dbReference type="GO" id="GO:0004424">
    <property type="term" value="F:imidazoleglycerol-phosphate dehydratase activity"/>
    <property type="evidence" value="ECO:0000318"/>
    <property type="project" value="GO_Central"/>
</dbReference>
<dbReference type="GO" id="GO:0000105">
    <property type="term" value="P:L-histidine biosynthetic process"/>
    <property type="evidence" value="ECO:0000318"/>
    <property type="project" value="GO_Central"/>
</dbReference>
<dbReference type="CDD" id="cd07914">
    <property type="entry name" value="IGPD"/>
    <property type="match status" value="1"/>
</dbReference>
<dbReference type="FunFam" id="3.30.230.40:FF:000001">
    <property type="entry name" value="Imidazoleglycerol-phosphate dehydratase HisB"/>
    <property type="match status" value="1"/>
</dbReference>
<dbReference type="FunFam" id="3.30.230.40:FF:000003">
    <property type="entry name" value="Imidazoleglycerol-phosphate dehydratase HisB"/>
    <property type="match status" value="1"/>
</dbReference>
<dbReference type="Gene3D" id="3.30.230.40">
    <property type="entry name" value="Imidazole glycerol phosphate dehydratase, domain 1"/>
    <property type="match status" value="2"/>
</dbReference>
<dbReference type="HAMAP" id="MF_00076">
    <property type="entry name" value="HisB"/>
    <property type="match status" value="1"/>
</dbReference>
<dbReference type="InterPro" id="IPR038494">
    <property type="entry name" value="IGPD_sf"/>
</dbReference>
<dbReference type="InterPro" id="IPR000807">
    <property type="entry name" value="ImidazoleglycerolP_deHydtase"/>
</dbReference>
<dbReference type="InterPro" id="IPR020565">
    <property type="entry name" value="ImidazoleglycerP_deHydtase_CS"/>
</dbReference>
<dbReference type="InterPro" id="IPR020568">
    <property type="entry name" value="Ribosomal_Su5_D2-typ_SF"/>
</dbReference>
<dbReference type="NCBIfam" id="NF002107">
    <property type="entry name" value="PRK00951.1-2"/>
    <property type="match status" value="1"/>
</dbReference>
<dbReference type="NCBIfam" id="NF002111">
    <property type="entry name" value="PRK00951.2-1"/>
    <property type="match status" value="1"/>
</dbReference>
<dbReference type="NCBIfam" id="NF002114">
    <property type="entry name" value="PRK00951.2-4"/>
    <property type="match status" value="1"/>
</dbReference>
<dbReference type="PANTHER" id="PTHR23133:SF2">
    <property type="entry name" value="IMIDAZOLEGLYCEROL-PHOSPHATE DEHYDRATASE"/>
    <property type="match status" value="1"/>
</dbReference>
<dbReference type="PANTHER" id="PTHR23133">
    <property type="entry name" value="IMIDAZOLEGLYCEROL-PHOSPHATE DEHYDRATASE HIS7"/>
    <property type="match status" value="1"/>
</dbReference>
<dbReference type="Pfam" id="PF00475">
    <property type="entry name" value="IGPD"/>
    <property type="match status" value="1"/>
</dbReference>
<dbReference type="SUPFAM" id="SSF54211">
    <property type="entry name" value="Ribosomal protein S5 domain 2-like"/>
    <property type="match status" value="2"/>
</dbReference>
<dbReference type="PROSITE" id="PS00954">
    <property type="entry name" value="IGP_DEHYDRATASE_1"/>
    <property type="match status" value="1"/>
</dbReference>
<dbReference type="PROSITE" id="PS00955">
    <property type="entry name" value="IGP_DEHYDRATASE_2"/>
    <property type="match status" value="1"/>
</dbReference>
<sequence length="194" mass="21356">MRTATKTRVTAETSIELSINLDSQVESTISTGVGFLDHMLTLFAKHSRVTLNVKADGDTYVDAHHTVEDIGITLGLCLKEALADKASINRYGSAYVPMDESLGFCALDLSGRSYLVFDAELTNPKLGDFDTELVEEFFQAVAFNTEMNLHLRVLYGKNTHHKIEALFKAFGRALREAITINPEIKGVNSTKGVL</sequence>
<feature type="chain" id="PRO_0000158141" description="Imidazoleglycerol-phosphate dehydratase">
    <location>
        <begin position="1"/>
        <end position="194"/>
    </location>
</feature>
<accession>Q8Y9G2</accession>
<protein>
    <recommendedName>
        <fullName evidence="1">Imidazoleglycerol-phosphate dehydratase</fullName>
        <shortName evidence="1">IGPD</shortName>
        <ecNumber evidence="1">4.2.1.19</ecNumber>
    </recommendedName>
</protein>
<comment type="catalytic activity">
    <reaction evidence="1">
        <text>D-erythro-1-(imidazol-4-yl)glycerol 3-phosphate = 3-(imidazol-4-yl)-2-oxopropyl phosphate + H2O</text>
        <dbReference type="Rhea" id="RHEA:11040"/>
        <dbReference type="ChEBI" id="CHEBI:15377"/>
        <dbReference type="ChEBI" id="CHEBI:57766"/>
        <dbReference type="ChEBI" id="CHEBI:58278"/>
        <dbReference type="EC" id="4.2.1.19"/>
    </reaction>
</comment>
<comment type="pathway">
    <text evidence="1">Amino-acid biosynthesis; L-histidine biosynthesis; L-histidine from 5-phospho-alpha-D-ribose 1-diphosphate: step 6/9.</text>
</comment>
<comment type="subcellular location">
    <subcellularLocation>
        <location evidence="1">Cytoplasm</location>
    </subcellularLocation>
</comment>
<comment type="similarity">
    <text evidence="1">Belongs to the imidazoleglycerol-phosphate dehydratase family.</text>
</comment>
<reference key="1">
    <citation type="journal article" date="2001" name="Science">
        <title>Comparative genomics of Listeria species.</title>
        <authorList>
            <person name="Glaser P."/>
            <person name="Frangeul L."/>
            <person name="Buchrieser C."/>
            <person name="Rusniok C."/>
            <person name="Amend A."/>
            <person name="Baquero F."/>
            <person name="Berche P."/>
            <person name="Bloecker H."/>
            <person name="Brandt P."/>
            <person name="Chakraborty T."/>
            <person name="Charbit A."/>
            <person name="Chetouani F."/>
            <person name="Couve E."/>
            <person name="de Daruvar A."/>
            <person name="Dehoux P."/>
            <person name="Domann E."/>
            <person name="Dominguez-Bernal G."/>
            <person name="Duchaud E."/>
            <person name="Durant L."/>
            <person name="Dussurget O."/>
            <person name="Entian K.-D."/>
            <person name="Fsihi H."/>
            <person name="Garcia-del Portillo F."/>
            <person name="Garrido P."/>
            <person name="Gautier L."/>
            <person name="Goebel W."/>
            <person name="Gomez-Lopez N."/>
            <person name="Hain T."/>
            <person name="Hauf J."/>
            <person name="Jackson D."/>
            <person name="Jones L.-M."/>
            <person name="Kaerst U."/>
            <person name="Kreft J."/>
            <person name="Kuhn M."/>
            <person name="Kunst F."/>
            <person name="Kurapkat G."/>
            <person name="Madueno E."/>
            <person name="Maitournam A."/>
            <person name="Mata Vicente J."/>
            <person name="Ng E."/>
            <person name="Nedjari H."/>
            <person name="Nordsiek G."/>
            <person name="Novella S."/>
            <person name="de Pablos B."/>
            <person name="Perez-Diaz J.-C."/>
            <person name="Purcell R."/>
            <person name="Remmel B."/>
            <person name="Rose M."/>
            <person name="Schlueter T."/>
            <person name="Simoes N."/>
            <person name="Tierrez A."/>
            <person name="Vazquez-Boland J.-A."/>
            <person name="Voss H."/>
            <person name="Wehland J."/>
            <person name="Cossart P."/>
        </authorList>
    </citation>
    <scope>NUCLEOTIDE SEQUENCE [LARGE SCALE GENOMIC DNA]</scope>
    <source>
        <strain>ATCC BAA-679 / EGD-e</strain>
    </source>
</reference>
<organism>
    <name type="scientific">Listeria monocytogenes serovar 1/2a (strain ATCC BAA-679 / EGD-e)</name>
    <dbReference type="NCBI Taxonomy" id="169963"/>
    <lineage>
        <taxon>Bacteria</taxon>
        <taxon>Bacillati</taxon>
        <taxon>Bacillota</taxon>
        <taxon>Bacilli</taxon>
        <taxon>Bacillales</taxon>
        <taxon>Listeriaceae</taxon>
        <taxon>Listeria</taxon>
    </lineage>
</organism>
<proteinExistence type="inferred from homology"/>
<evidence type="ECO:0000255" key="1">
    <source>
        <dbReference type="HAMAP-Rule" id="MF_00076"/>
    </source>
</evidence>
<keyword id="KW-0028">Amino-acid biosynthesis</keyword>
<keyword id="KW-0963">Cytoplasm</keyword>
<keyword id="KW-0368">Histidine biosynthesis</keyword>
<keyword id="KW-0456">Lyase</keyword>
<keyword id="KW-1185">Reference proteome</keyword>
<gene>
    <name evidence="1" type="primary">hisB</name>
    <name type="ordered locus">lmo0566</name>
</gene>